<accession>C5CWN5</accession>
<comment type="function">
    <text evidence="1">Catalyzes the attachment of serine to tRNA(Ser). Is also able to aminoacylate tRNA(Sec) with serine, to form the misacylated tRNA L-seryl-tRNA(Sec), which will be further converted into selenocysteinyl-tRNA(Sec).</text>
</comment>
<comment type="catalytic activity">
    <reaction evidence="1">
        <text>tRNA(Ser) + L-serine + ATP = L-seryl-tRNA(Ser) + AMP + diphosphate + H(+)</text>
        <dbReference type="Rhea" id="RHEA:12292"/>
        <dbReference type="Rhea" id="RHEA-COMP:9669"/>
        <dbReference type="Rhea" id="RHEA-COMP:9703"/>
        <dbReference type="ChEBI" id="CHEBI:15378"/>
        <dbReference type="ChEBI" id="CHEBI:30616"/>
        <dbReference type="ChEBI" id="CHEBI:33019"/>
        <dbReference type="ChEBI" id="CHEBI:33384"/>
        <dbReference type="ChEBI" id="CHEBI:78442"/>
        <dbReference type="ChEBI" id="CHEBI:78533"/>
        <dbReference type="ChEBI" id="CHEBI:456215"/>
        <dbReference type="EC" id="6.1.1.11"/>
    </reaction>
</comment>
<comment type="catalytic activity">
    <reaction evidence="1">
        <text>tRNA(Sec) + L-serine + ATP = L-seryl-tRNA(Sec) + AMP + diphosphate + H(+)</text>
        <dbReference type="Rhea" id="RHEA:42580"/>
        <dbReference type="Rhea" id="RHEA-COMP:9742"/>
        <dbReference type="Rhea" id="RHEA-COMP:10128"/>
        <dbReference type="ChEBI" id="CHEBI:15378"/>
        <dbReference type="ChEBI" id="CHEBI:30616"/>
        <dbReference type="ChEBI" id="CHEBI:33019"/>
        <dbReference type="ChEBI" id="CHEBI:33384"/>
        <dbReference type="ChEBI" id="CHEBI:78442"/>
        <dbReference type="ChEBI" id="CHEBI:78533"/>
        <dbReference type="ChEBI" id="CHEBI:456215"/>
        <dbReference type="EC" id="6.1.1.11"/>
    </reaction>
</comment>
<comment type="pathway">
    <text evidence="1">Aminoacyl-tRNA biosynthesis; selenocysteinyl-tRNA(Sec) biosynthesis; L-seryl-tRNA(Sec) from L-serine and tRNA(Sec): step 1/1.</text>
</comment>
<comment type="subunit">
    <text evidence="1">Homodimer. The tRNA molecule binds across the dimer.</text>
</comment>
<comment type="subcellular location">
    <subcellularLocation>
        <location evidence="1">Cytoplasm</location>
    </subcellularLocation>
</comment>
<comment type="domain">
    <text evidence="1">Consists of two distinct domains, a catalytic core and a N-terminal extension that is involved in tRNA binding.</text>
</comment>
<comment type="similarity">
    <text evidence="1">Belongs to the class-II aminoacyl-tRNA synthetase family. Type-1 seryl-tRNA synthetase subfamily.</text>
</comment>
<sequence>MLDITLLRKDLASAVAGLEKRKKNQPYLDVSAFTALEAERKTLQTRTEEIQARRNALNKQIGPLKAKGEPVDALMAEVNALKAEQESQSARLDQIQPELQALLLAVPNLPHVSVPVGEDEAGNVEMRRWSPQGGAGANAAPLPFAAKDHVDLGAPLGLDFEMGAKLAGSRFTVMKGPIARLHRALAQFMLDIQTEKHGYAECYVPYIVNAATLSGTGQLPKFEGDLFAAKKGGQEGEPAPDHSALYLIPTSEVPLTNFVRDEVVAEAQLPIKLTAHTPCFRSEAGSAGRDTRGMIRQHQFDKVEMVQIVHPEKSYDALEQMTGHAEAVLQALELPYRVVLLCTGDMGFGATKTYDLEVWLPAQNTYREISSVSNCEAFQARRLQARFKNAQGKNELVHTLNGSGLAVGRTLVAVLENHQNEDGSINVPAALRPYLGGLELLRG</sequence>
<gene>
    <name evidence="1" type="primary">serS</name>
    <name type="ordered locus">Vapar_4028</name>
</gene>
<dbReference type="EC" id="6.1.1.11" evidence="1"/>
<dbReference type="EMBL" id="CP001635">
    <property type="protein sequence ID" value="ACS20642.1"/>
    <property type="molecule type" value="Genomic_DNA"/>
</dbReference>
<dbReference type="SMR" id="C5CWN5"/>
<dbReference type="STRING" id="543728.Vapar_4028"/>
<dbReference type="KEGG" id="vap:Vapar_4028"/>
<dbReference type="eggNOG" id="COG0172">
    <property type="taxonomic scope" value="Bacteria"/>
</dbReference>
<dbReference type="HOGENOM" id="CLU_023797_1_1_4"/>
<dbReference type="OrthoDB" id="9804647at2"/>
<dbReference type="UniPathway" id="UPA00906">
    <property type="reaction ID" value="UER00895"/>
</dbReference>
<dbReference type="GO" id="GO:0005737">
    <property type="term" value="C:cytoplasm"/>
    <property type="evidence" value="ECO:0007669"/>
    <property type="project" value="UniProtKB-SubCell"/>
</dbReference>
<dbReference type="GO" id="GO:0005524">
    <property type="term" value="F:ATP binding"/>
    <property type="evidence" value="ECO:0007669"/>
    <property type="project" value="UniProtKB-UniRule"/>
</dbReference>
<dbReference type="GO" id="GO:0004828">
    <property type="term" value="F:serine-tRNA ligase activity"/>
    <property type="evidence" value="ECO:0007669"/>
    <property type="project" value="UniProtKB-UniRule"/>
</dbReference>
<dbReference type="GO" id="GO:0016260">
    <property type="term" value="P:selenocysteine biosynthetic process"/>
    <property type="evidence" value="ECO:0007669"/>
    <property type="project" value="UniProtKB-UniRule"/>
</dbReference>
<dbReference type="GO" id="GO:0006434">
    <property type="term" value="P:seryl-tRNA aminoacylation"/>
    <property type="evidence" value="ECO:0007669"/>
    <property type="project" value="UniProtKB-UniRule"/>
</dbReference>
<dbReference type="CDD" id="cd00770">
    <property type="entry name" value="SerRS_core"/>
    <property type="match status" value="1"/>
</dbReference>
<dbReference type="Gene3D" id="3.30.930.10">
    <property type="entry name" value="Bira Bifunctional Protein, Domain 2"/>
    <property type="match status" value="1"/>
</dbReference>
<dbReference type="Gene3D" id="1.10.287.40">
    <property type="entry name" value="Serine-tRNA synthetase, tRNA binding domain"/>
    <property type="match status" value="1"/>
</dbReference>
<dbReference type="HAMAP" id="MF_00176">
    <property type="entry name" value="Ser_tRNA_synth_type1"/>
    <property type="match status" value="1"/>
</dbReference>
<dbReference type="InterPro" id="IPR002314">
    <property type="entry name" value="aa-tRNA-synt_IIb"/>
</dbReference>
<dbReference type="InterPro" id="IPR006195">
    <property type="entry name" value="aa-tRNA-synth_II"/>
</dbReference>
<dbReference type="InterPro" id="IPR045864">
    <property type="entry name" value="aa-tRNA-synth_II/BPL/LPL"/>
</dbReference>
<dbReference type="InterPro" id="IPR002317">
    <property type="entry name" value="Ser-tRNA-ligase_type_1"/>
</dbReference>
<dbReference type="InterPro" id="IPR015866">
    <property type="entry name" value="Ser-tRNA-synth_1_N"/>
</dbReference>
<dbReference type="InterPro" id="IPR042103">
    <property type="entry name" value="SerRS_1_N_sf"/>
</dbReference>
<dbReference type="InterPro" id="IPR033729">
    <property type="entry name" value="SerRS_core"/>
</dbReference>
<dbReference type="InterPro" id="IPR010978">
    <property type="entry name" value="tRNA-bd_arm"/>
</dbReference>
<dbReference type="NCBIfam" id="TIGR00414">
    <property type="entry name" value="serS"/>
    <property type="match status" value="1"/>
</dbReference>
<dbReference type="PANTHER" id="PTHR43697:SF1">
    <property type="entry name" value="SERINE--TRNA LIGASE"/>
    <property type="match status" value="1"/>
</dbReference>
<dbReference type="PANTHER" id="PTHR43697">
    <property type="entry name" value="SERYL-TRNA SYNTHETASE"/>
    <property type="match status" value="1"/>
</dbReference>
<dbReference type="Pfam" id="PF02403">
    <property type="entry name" value="Seryl_tRNA_N"/>
    <property type="match status" value="1"/>
</dbReference>
<dbReference type="Pfam" id="PF00587">
    <property type="entry name" value="tRNA-synt_2b"/>
    <property type="match status" value="1"/>
</dbReference>
<dbReference type="PIRSF" id="PIRSF001529">
    <property type="entry name" value="Ser-tRNA-synth_IIa"/>
    <property type="match status" value="1"/>
</dbReference>
<dbReference type="PRINTS" id="PR00981">
    <property type="entry name" value="TRNASYNTHSER"/>
</dbReference>
<dbReference type="SUPFAM" id="SSF55681">
    <property type="entry name" value="Class II aaRS and biotin synthetases"/>
    <property type="match status" value="1"/>
</dbReference>
<dbReference type="SUPFAM" id="SSF46589">
    <property type="entry name" value="tRNA-binding arm"/>
    <property type="match status" value="1"/>
</dbReference>
<dbReference type="PROSITE" id="PS50862">
    <property type="entry name" value="AA_TRNA_LIGASE_II"/>
    <property type="match status" value="1"/>
</dbReference>
<feature type="chain" id="PRO_1000203779" description="Serine--tRNA ligase">
    <location>
        <begin position="1"/>
        <end position="443"/>
    </location>
</feature>
<feature type="binding site" evidence="1">
    <location>
        <begin position="250"/>
        <end position="252"/>
    </location>
    <ligand>
        <name>L-serine</name>
        <dbReference type="ChEBI" id="CHEBI:33384"/>
    </ligand>
</feature>
<feature type="binding site" evidence="1">
    <location>
        <begin position="281"/>
        <end position="283"/>
    </location>
    <ligand>
        <name>ATP</name>
        <dbReference type="ChEBI" id="CHEBI:30616"/>
    </ligand>
</feature>
<feature type="binding site" evidence="1">
    <location>
        <position position="304"/>
    </location>
    <ligand>
        <name>L-serine</name>
        <dbReference type="ChEBI" id="CHEBI:33384"/>
    </ligand>
</feature>
<feature type="binding site" evidence="1">
    <location>
        <begin position="368"/>
        <end position="371"/>
    </location>
    <ligand>
        <name>ATP</name>
        <dbReference type="ChEBI" id="CHEBI:30616"/>
    </ligand>
</feature>
<feature type="binding site" evidence="1">
    <location>
        <position position="403"/>
    </location>
    <ligand>
        <name>L-serine</name>
        <dbReference type="ChEBI" id="CHEBI:33384"/>
    </ligand>
</feature>
<protein>
    <recommendedName>
        <fullName evidence="1">Serine--tRNA ligase</fullName>
        <ecNumber evidence="1">6.1.1.11</ecNumber>
    </recommendedName>
    <alternativeName>
        <fullName evidence="1">Seryl-tRNA synthetase</fullName>
        <shortName evidence="1">SerRS</shortName>
    </alternativeName>
    <alternativeName>
        <fullName evidence="1">Seryl-tRNA(Ser/Sec) synthetase</fullName>
    </alternativeName>
</protein>
<name>SYS_VARPS</name>
<reference key="1">
    <citation type="journal article" date="2011" name="J. Bacteriol.">
        <title>Complete genome sequence of the metabolically versatile plant growth-promoting endophyte, Variovorax paradoxus S110.</title>
        <authorList>
            <person name="Han J.I."/>
            <person name="Choi H.K."/>
            <person name="Lee S.W."/>
            <person name="Orwin P.M."/>
            <person name="Kim J."/>
            <person name="Laroe S.L."/>
            <person name="Kim T.G."/>
            <person name="O'Neil J."/>
            <person name="Leadbetter J.R."/>
            <person name="Lee S.Y."/>
            <person name="Hur C.G."/>
            <person name="Spain J.C."/>
            <person name="Ovchinnikova G."/>
            <person name="Goodwin L."/>
            <person name="Han C."/>
        </authorList>
    </citation>
    <scope>NUCLEOTIDE SEQUENCE [LARGE SCALE GENOMIC DNA]</scope>
    <source>
        <strain>S110</strain>
    </source>
</reference>
<keyword id="KW-0030">Aminoacyl-tRNA synthetase</keyword>
<keyword id="KW-0067">ATP-binding</keyword>
<keyword id="KW-0963">Cytoplasm</keyword>
<keyword id="KW-0436">Ligase</keyword>
<keyword id="KW-0547">Nucleotide-binding</keyword>
<keyword id="KW-0648">Protein biosynthesis</keyword>
<organism>
    <name type="scientific">Variovorax paradoxus (strain S110)</name>
    <dbReference type="NCBI Taxonomy" id="543728"/>
    <lineage>
        <taxon>Bacteria</taxon>
        <taxon>Pseudomonadati</taxon>
        <taxon>Pseudomonadota</taxon>
        <taxon>Betaproteobacteria</taxon>
        <taxon>Burkholderiales</taxon>
        <taxon>Comamonadaceae</taxon>
        <taxon>Variovorax</taxon>
    </lineage>
</organism>
<evidence type="ECO:0000255" key="1">
    <source>
        <dbReference type="HAMAP-Rule" id="MF_00176"/>
    </source>
</evidence>
<proteinExistence type="inferred from homology"/>